<feature type="chain" id="PRO_0000256192" description="Mitochondrial fission 1 protein">
    <location>
        <begin position="1"/>
        <end position="154"/>
    </location>
</feature>
<feature type="topological domain" description="Cytoplasmic" evidence="2">
    <location>
        <begin position="1"/>
        <end position="128"/>
    </location>
</feature>
<feature type="transmembrane region" description="Helical" evidence="2">
    <location>
        <begin position="129"/>
        <end position="149"/>
    </location>
</feature>
<feature type="topological domain" description="Mitochondrial intermembrane" evidence="2">
    <location>
        <begin position="150"/>
        <end position="154"/>
    </location>
</feature>
<feature type="repeat" description="TPR">
    <location>
        <begin position="76"/>
        <end position="109"/>
    </location>
</feature>
<name>FIS1_YARLI</name>
<evidence type="ECO:0000250" key="1"/>
<evidence type="ECO:0000255" key="2"/>
<evidence type="ECO:0000305" key="3"/>
<protein>
    <recommendedName>
        <fullName>Mitochondrial fission 1 protein</fullName>
    </recommendedName>
</protein>
<comment type="function">
    <text evidence="1">Has a role in mitochondrial fission. Has a role in outer membrane fission but not matrix separation (By similarity).</text>
</comment>
<comment type="subcellular location">
    <subcellularLocation>
        <location evidence="1">Mitochondrion outer membrane</location>
        <topology evidence="1">Single-pass membrane protein</topology>
    </subcellularLocation>
</comment>
<comment type="domain">
    <text evidence="1">The C-terminus is required for mitochondrial localization, while the N-terminus is necessary for mitochondrial fission.</text>
</comment>
<comment type="similarity">
    <text evidence="3">Belongs to the FIS1 family.</text>
</comment>
<comment type="sequence caution" evidence="3">
    <conflict type="erroneous initiation">
        <sequence resource="EMBL-CDS" id="CAG82803"/>
    </conflict>
</comment>
<accession>Q6CFJ0</accession>
<reference key="1">
    <citation type="journal article" date="2004" name="Nature">
        <title>Genome evolution in yeasts.</title>
        <authorList>
            <person name="Dujon B."/>
            <person name="Sherman D."/>
            <person name="Fischer G."/>
            <person name="Durrens P."/>
            <person name="Casaregola S."/>
            <person name="Lafontaine I."/>
            <person name="de Montigny J."/>
            <person name="Marck C."/>
            <person name="Neuveglise C."/>
            <person name="Talla E."/>
            <person name="Goffard N."/>
            <person name="Frangeul L."/>
            <person name="Aigle M."/>
            <person name="Anthouard V."/>
            <person name="Babour A."/>
            <person name="Barbe V."/>
            <person name="Barnay S."/>
            <person name="Blanchin S."/>
            <person name="Beckerich J.-M."/>
            <person name="Beyne E."/>
            <person name="Bleykasten C."/>
            <person name="Boisrame A."/>
            <person name="Boyer J."/>
            <person name="Cattolico L."/>
            <person name="Confanioleri F."/>
            <person name="de Daruvar A."/>
            <person name="Despons L."/>
            <person name="Fabre E."/>
            <person name="Fairhead C."/>
            <person name="Ferry-Dumazet H."/>
            <person name="Groppi A."/>
            <person name="Hantraye F."/>
            <person name="Hennequin C."/>
            <person name="Jauniaux N."/>
            <person name="Joyet P."/>
            <person name="Kachouri R."/>
            <person name="Kerrest A."/>
            <person name="Koszul R."/>
            <person name="Lemaire M."/>
            <person name="Lesur I."/>
            <person name="Ma L."/>
            <person name="Muller H."/>
            <person name="Nicaud J.-M."/>
            <person name="Nikolski M."/>
            <person name="Oztas S."/>
            <person name="Ozier-Kalogeropoulos O."/>
            <person name="Pellenz S."/>
            <person name="Potier S."/>
            <person name="Richard G.-F."/>
            <person name="Straub M.-L."/>
            <person name="Suleau A."/>
            <person name="Swennen D."/>
            <person name="Tekaia F."/>
            <person name="Wesolowski-Louvel M."/>
            <person name="Westhof E."/>
            <person name="Wirth B."/>
            <person name="Zeniou-Meyer M."/>
            <person name="Zivanovic Y."/>
            <person name="Bolotin-Fukuhara M."/>
            <person name="Thierry A."/>
            <person name="Bouchier C."/>
            <person name="Caudron B."/>
            <person name="Scarpelli C."/>
            <person name="Gaillardin C."/>
            <person name="Weissenbach J."/>
            <person name="Wincker P."/>
            <person name="Souciet J.-L."/>
        </authorList>
    </citation>
    <scope>NUCLEOTIDE SEQUENCE [LARGE SCALE GENOMIC DNA]</scope>
    <source>
        <strain>CLIB 122 / E 150</strain>
    </source>
</reference>
<gene>
    <name type="primary">FIS1</name>
    <name type="ordered locus">YALI0B06556g</name>
</gene>
<keyword id="KW-0472">Membrane</keyword>
<keyword id="KW-0496">Mitochondrion</keyword>
<keyword id="KW-1000">Mitochondrion outer membrane</keyword>
<keyword id="KW-1185">Reference proteome</keyword>
<keyword id="KW-0677">Repeat</keyword>
<keyword id="KW-0802">TPR repeat</keyword>
<keyword id="KW-0812">Transmembrane</keyword>
<keyword id="KW-1133">Transmembrane helix</keyword>
<dbReference type="EMBL" id="CR382128">
    <property type="protein sequence ID" value="CAG82803.1"/>
    <property type="status" value="ALT_INIT"/>
    <property type="molecule type" value="Genomic_DNA"/>
</dbReference>
<dbReference type="RefSeq" id="XP_500572.1">
    <property type="nucleotide sequence ID" value="XM_500572.1"/>
</dbReference>
<dbReference type="SMR" id="Q6CFJ0"/>
<dbReference type="FunCoup" id="Q6CFJ0">
    <property type="interactions" value="703"/>
</dbReference>
<dbReference type="STRING" id="284591.Q6CFJ0"/>
<dbReference type="KEGG" id="yli:2907409"/>
<dbReference type="InParanoid" id="Q6CFJ0"/>
<dbReference type="OrthoDB" id="48218at4891"/>
<dbReference type="Proteomes" id="UP000001300">
    <property type="component" value="Chromosome B"/>
</dbReference>
<dbReference type="GO" id="GO:0005741">
    <property type="term" value="C:mitochondrial outer membrane"/>
    <property type="evidence" value="ECO:0000318"/>
    <property type="project" value="GO_Central"/>
</dbReference>
<dbReference type="GO" id="GO:0005778">
    <property type="term" value="C:peroxisomal membrane"/>
    <property type="evidence" value="ECO:0000318"/>
    <property type="project" value="GO_Central"/>
</dbReference>
<dbReference type="GO" id="GO:0008289">
    <property type="term" value="F:lipid binding"/>
    <property type="evidence" value="ECO:0000318"/>
    <property type="project" value="GO_Central"/>
</dbReference>
<dbReference type="GO" id="GO:0060090">
    <property type="term" value="F:molecular adaptor activity"/>
    <property type="evidence" value="ECO:0000318"/>
    <property type="project" value="GO_Central"/>
</dbReference>
<dbReference type="GO" id="GO:0000266">
    <property type="term" value="P:mitochondrial fission"/>
    <property type="evidence" value="ECO:0000318"/>
    <property type="project" value="GO_Central"/>
</dbReference>
<dbReference type="GO" id="GO:0016559">
    <property type="term" value="P:peroxisome fission"/>
    <property type="evidence" value="ECO:0000318"/>
    <property type="project" value="GO_Central"/>
</dbReference>
<dbReference type="CDD" id="cd12212">
    <property type="entry name" value="Fis1"/>
    <property type="match status" value="1"/>
</dbReference>
<dbReference type="Gene3D" id="1.25.40.10">
    <property type="entry name" value="Tetratricopeptide repeat domain"/>
    <property type="match status" value="1"/>
</dbReference>
<dbReference type="InterPro" id="IPR016543">
    <property type="entry name" value="Fis1"/>
</dbReference>
<dbReference type="InterPro" id="IPR033745">
    <property type="entry name" value="Fis1_cytosol"/>
</dbReference>
<dbReference type="InterPro" id="IPR028061">
    <property type="entry name" value="Fis1_TPR_C"/>
</dbReference>
<dbReference type="InterPro" id="IPR028058">
    <property type="entry name" value="Fis1_TPR_N"/>
</dbReference>
<dbReference type="InterPro" id="IPR011990">
    <property type="entry name" value="TPR-like_helical_dom_sf"/>
</dbReference>
<dbReference type="PANTHER" id="PTHR13247:SF0">
    <property type="entry name" value="MITOCHONDRIAL FISSION 1 PROTEIN"/>
    <property type="match status" value="1"/>
</dbReference>
<dbReference type="PANTHER" id="PTHR13247">
    <property type="entry name" value="TETRATRICOPEPTIDE REPEAT PROTEIN 11 TPR REPEAT PROTEIN 11"/>
    <property type="match status" value="1"/>
</dbReference>
<dbReference type="Pfam" id="PF14853">
    <property type="entry name" value="Fis1_TPR_C"/>
    <property type="match status" value="1"/>
</dbReference>
<dbReference type="Pfam" id="PF14852">
    <property type="entry name" value="Fis1_TPR_N"/>
    <property type="match status" value="1"/>
</dbReference>
<dbReference type="PIRSF" id="PIRSF008835">
    <property type="entry name" value="TPR_repeat_11_Fis1"/>
    <property type="match status" value="1"/>
</dbReference>
<dbReference type="SUPFAM" id="SSF48452">
    <property type="entry name" value="TPR-like"/>
    <property type="match status" value="1"/>
</dbReference>
<proteinExistence type="inferred from homology"/>
<sequence length="154" mass="17392">MKKEDYLPNLVDIESPLSDEELYVLSQQYNNEGDFVSVQTRFNYAWGLIKSRKVEDQQLGVQILAQVYKDTPSRRRECLYYLAIGSYKLGEYTDARKYCDLLLQIEPDDPQSAKLRQIIEDKLAKEGMIGIAIVGGVIAVGAAVLGAVLSQKKR</sequence>
<organism>
    <name type="scientific">Yarrowia lipolytica (strain CLIB 122 / E 150)</name>
    <name type="common">Yeast</name>
    <name type="synonym">Candida lipolytica</name>
    <dbReference type="NCBI Taxonomy" id="284591"/>
    <lineage>
        <taxon>Eukaryota</taxon>
        <taxon>Fungi</taxon>
        <taxon>Dikarya</taxon>
        <taxon>Ascomycota</taxon>
        <taxon>Saccharomycotina</taxon>
        <taxon>Dipodascomycetes</taxon>
        <taxon>Dipodascales</taxon>
        <taxon>Dipodascales incertae sedis</taxon>
        <taxon>Yarrowia</taxon>
    </lineage>
</organism>